<feature type="chain" id="PRO_1000055276" description="Large ribosomal subunit protein uL6">
    <location>
        <begin position="1"/>
        <end position="177"/>
    </location>
</feature>
<organism>
    <name type="scientific">Brucella anthropi (strain ATCC 49188 / DSM 6882 / CCUG 24695 / JCM 21032 / LMG 3331 / NBRC 15819 / NCTC 12168 / Alc 37)</name>
    <name type="common">Ochrobactrum anthropi</name>
    <dbReference type="NCBI Taxonomy" id="439375"/>
    <lineage>
        <taxon>Bacteria</taxon>
        <taxon>Pseudomonadati</taxon>
        <taxon>Pseudomonadota</taxon>
        <taxon>Alphaproteobacteria</taxon>
        <taxon>Hyphomicrobiales</taxon>
        <taxon>Brucellaceae</taxon>
        <taxon>Brucella/Ochrobactrum group</taxon>
        <taxon>Brucella</taxon>
    </lineage>
</organism>
<sequence>MSRIGKKPVPVPAGVTASVDGQIVKAKGAKGELSFVVHDEVLVKMEDGAVSVDPRDQSKEARSKWGMSRTMISNIFVGVKDGFEKKLEISGVGYRAAMQGKNLQLSLGFSHEVVYDVPAGITVAVPKPTEIVVTGIDKQQVGQVAAEIREYRGPEPYKGKGVKYAGEKIVRKEGKKK</sequence>
<accession>A6X0D3</accession>
<comment type="function">
    <text evidence="1">This protein binds to the 23S rRNA, and is important in its secondary structure. It is located near the subunit interface in the base of the L7/L12 stalk, and near the tRNA binding site of the peptidyltransferase center.</text>
</comment>
<comment type="subunit">
    <text evidence="1">Part of the 50S ribosomal subunit.</text>
</comment>
<comment type="similarity">
    <text evidence="1">Belongs to the universal ribosomal protein uL6 family.</text>
</comment>
<protein>
    <recommendedName>
        <fullName evidence="1">Large ribosomal subunit protein uL6</fullName>
    </recommendedName>
    <alternativeName>
        <fullName evidence="2">50S ribosomal protein L6</fullName>
    </alternativeName>
</protein>
<dbReference type="EMBL" id="CP000758">
    <property type="protein sequence ID" value="ABS14687.1"/>
    <property type="molecule type" value="Genomic_DNA"/>
</dbReference>
<dbReference type="RefSeq" id="WP_010659923.1">
    <property type="nucleotide sequence ID" value="NC_009667.1"/>
</dbReference>
<dbReference type="SMR" id="A6X0D3"/>
<dbReference type="STRING" id="439375.Oant_1971"/>
<dbReference type="GeneID" id="61317571"/>
<dbReference type="KEGG" id="oan:Oant_1971"/>
<dbReference type="eggNOG" id="COG0097">
    <property type="taxonomic scope" value="Bacteria"/>
</dbReference>
<dbReference type="HOGENOM" id="CLU_065464_1_2_5"/>
<dbReference type="PhylomeDB" id="A6X0D3"/>
<dbReference type="Proteomes" id="UP000002301">
    <property type="component" value="Chromosome 1"/>
</dbReference>
<dbReference type="GO" id="GO:0022625">
    <property type="term" value="C:cytosolic large ribosomal subunit"/>
    <property type="evidence" value="ECO:0007669"/>
    <property type="project" value="TreeGrafter"/>
</dbReference>
<dbReference type="GO" id="GO:0019843">
    <property type="term" value="F:rRNA binding"/>
    <property type="evidence" value="ECO:0007669"/>
    <property type="project" value="UniProtKB-UniRule"/>
</dbReference>
<dbReference type="GO" id="GO:0003735">
    <property type="term" value="F:structural constituent of ribosome"/>
    <property type="evidence" value="ECO:0007669"/>
    <property type="project" value="InterPro"/>
</dbReference>
<dbReference type="GO" id="GO:0002181">
    <property type="term" value="P:cytoplasmic translation"/>
    <property type="evidence" value="ECO:0007669"/>
    <property type="project" value="TreeGrafter"/>
</dbReference>
<dbReference type="FunFam" id="3.90.930.12:FF:000001">
    <property type="entry name" value="50S ribosomal protein L6"/>
    <property type="match status" value="1"/>
</dbReference>
<dbReference type="Gene3D" id="3.90.930.12">
    <property type="entry name" value="Ribosomal protein L6, alpha-beta domain"/>
    <property type="match status" value="2"/>
</dbReference>
<dbReference type="HAMAP" id="MF_01365_B">
    <property type="entry name" value="Ribosomal_uL6_B"/>
    <property type="match status" value="1"/>
</dbReference>
<dbReference type="InterPro" id="IPR000702">
    <property type="entry name" value="Ribosomal_uL6-like"/>
</dbReference>
<dbReference type="InterPro" id="IPR036789">
    <property type="entry name" value="Ribosomal_uL6-like_a/b-dom_sf"/>
</dbReference>
<dbReference type="InterPro" id="IPR020040">
    <property type="entry name" value="Ribosomal_uL6_a/b-dom"/>
</dbReference>
<dbReference type="InterPro" id="IPR019906">
    <property type="entry name" value="Ribosomal_uL6_bac-type"/>
</dbReference>
<dbReference type="InterPro" id="IPR002358">
    <property type="entry name" value="Ribosomal_uL6_CS"/>
</dbReference>
<dbReference type="NCBIfam" id="TIGR03654">
    <property type="entry name" value="L6_bact"/>
    <property type="match status" value="1"/>
</dbReference>
<dbReference type="PANTHER" id="PTHR11655">
    <property type="entry name" value="60S/50S RIBOSOMAL PROTEIN L6/L9"/>
    <property type="match status" value="1"/>
</dbReference>
<dbReference type="PANTHER" id="PTHR11655:SF14">
    <property type="entry name" value="LARGE RIBOSOMAL SUBUNIT PROTEIN UL6M"/>
    <property type="match status" value="1"/>
</dbReference>
<dbReference type="Pfam" id="PF00347">
    <property type="entry name" value="Ribosomal_L6"/>
    <property type="match status" value="2"/>
</dbReference>
<dbReference type="PIRSF" id="PIRSF002162">
    <property type="entry name" value="Ribosomal_L6"/>
    <property type="match status" value="1"/>
</dbReference>
<dbReference type="PRINTS" id="PR00059">
    <property type="entry name" value="RIBOSOMALL6"/>
</dbReference>
<dbReference type="SUPFAM" id="SSF56053">
    <property type="entry name" value="Ribosomal protein L6"/>
    <property type="match status" value="2"/>
</dbReference>
<dbReference type="PROSITE" id="PS00525">
    <property type="entry name" value="RIBOSOMAL_L6_1"/>
    <property type="match status" value="1"/>
</dbReference>
<proteinExistence type="inferred from homology"/>
<evidence type="ECO:0000255" key="1">
    <source>
        <dbReference type="HAMAP-Rule" id="MF_01365"/>
    </source>
</evidence>
<evidence type="ECO:0000305" key="2"/>
<keyword id="KW-1185">Reference proteome</keyword>
<keyword id="KW-0687">Ribonucleoprotein</keyword>
<keyword id="KW-0689">Ribosomal protein</keyword>
<keyword id="KW-0694">RNA-binding</keyword>
<keyword id="KW-0699">rRNA-binding</keyword>
<gene>
    <name evidence="1" type="primary">rplF</name>
    <name type="ordered locus">Oant_1971</name>
</gene>
<reference key="1">
    <citation type="journal article" date="2011" name="J. Bacteriol.">
        <title>Genome of Ochrobactrum anthropi ATCC 49188 T, a versatile opportunistic pathogen and symbiont of several eukaryotic hosts.</title>
        <authorList>
            <person name="Chain P.S."/>
            <person name="Lang D.M."/>
            <person name="Comerci D.J."/>
            <person name="Malfatti S.A."/>
            <person name="Vergez L.M."/>
            <person name="Shin M."/>
            <person name="Ugalde R.A."/>
            <person name="Garcia E."/>
            <person name="Tolmasky M.E."/>
        </authorList>
    </citation>
    <scope>NUCLEOTIDE SEQUENCE [LARGE SCALE GENOMIC DNA]</scope>
    <source>
        <strain>ATCC 49188 / DSM 6882 / CCUG 24695 / JCM 21032 / LMG 3331 / NBRC 15819 / NCTC 12168 / Alc 37</strain>
    </source>
</reference>
<name>RL6_BRUA4</name>